<gene>
    <name evidence="1" type="primary">rplB</name>
    <name type="ordered locus">RHE_CH01678</name>
</gene>
<accession>Q2K9L3</accession>
<evidence type="ECO:0000255" key="1">
    <source>
        <dbReference type="HAMAP-Rule" id="MF_01320"/>
    </source>
</evidence>
<evidence type="ECO:0000256" key="2">
    <source>
        <dbReference type="SAM" id="MobiDB-lite"/>
    </source>
</evidence>
<evidence type="ECO:0000305" key="3"/>
<dbReference type="EMBL" id="CP000133">
    <property type="protein sequence ID" value="ABC90473.1"/>
    <property type="molecule type" value="Genomic_DNA"/>
</dbReference>
<dbReference type="RefSeq" id="WP_011424982.1">
    <property type="nucleotide sequence ID" value="NC_007761.1"/>
</dbReference>
<dbReference type="SMR" id="Q2K9L3"/>
<dbReference type="KEGG" id="ret:RHE_CH01678"/>
<dbReference type="eggNOG" id="COG0090">
    <property type="taxonomic scope" value="Bacteria"/>
</dbReference>
<dbReference type="HOGENOM" id="CLU_036235_2_1_5"/>
<dbReference type="OrthoDB" id="9778722at2"/>
<dbReference type="Proteomes" id="UP000001936">
    <property type="component" value="Chromosome"/>
</dbReference>
<dbReference type="GO" id="GO:0015934">
    <property type="term" value="C:large ribosomal subunit"/>
    <property type="evidence" value="ECO:0007669"/>
    <property type="project" value="InterPro"/>
</dbReference>
<dbReference type="GO" id="GO:0019843">
    <property type="term" value="F:rRNA binding"/>
    <property type="evidence" value="ECO:0007669"/>
    <property type="project" value="UniProtKB-UniRule"/>
</dbReference>
<dbReference type="GO" id="GO:0003735">
    <property type="term" value="F:structural constituent of ribosome"/>
    <property type="evidence" value="ECO:0007669"/>
    <property type="project" value="InterPro"/>
</dbReference>
<dbReference type="GO" id="GO:0016740">
    <property type="term" value="F:transferase activity"/>
    <property type="evidence" value="ECO:0007669"/>
    <property type="project" value="InterPro"/>
</dbReference>
<dbReference type="GO" id="GO:0002181">
    <property type="term" value="P:cytoplasmic translation"/>
    <property type="evidence" value="ECO:0007669"/>
    <property type="project" value="TreeGrafter"/>
</dbReference>
<dbReference type="FunFam" id="2.30.30.30:FF:000001">
    <property type="entry name" value="50S ribosomal protein L2"/>
    <property type="match status" value="1"/>
</dbReference>
<dbReference type="FunFam" id="2.40.50.140:FF:000003">
    <property type="entry name" value="50S ribosomal protein L2"/>
    <property type="match status" value="1"/>
</dbReference>
<dbReference type="FunFam" id="4.10.950.10:FF:000001">
    <property type="entry name" value="50S ribosomal protein L2"/>
    <property type="match status" value="1"/>
</dbReference>
<dbReference type="Gene3D" id="2.30.30.30">
    <property type="match status" value="1"/>
</dbReference>
<dbReference type="Gene3D" id="2.40.50.140">
    <property type="entry name" value="Nucleic acid-binding proteins"/>
    <property type="match status" value="1"/>
</dbReference>
<dbReference type="Gene3D" id="4.10.950.10">
    <property type="entry name" value="Ribosomal protein L2, domain 3"/>
    <property type="match status" value="1"/>
</dbReference>
<dbReference type="HAMAP" id="MF_01320_B">
    <property type="entry name" value="Ribosomal_uL2_B"/>
    <property type="match status" value="1"/>
</dbReference>
<dbReference type="InterPro" id="IPR012340">
    <property type="entry name" value="NA-bd_OB-fold"/>
</dbReference>
<dbReference type="InterPro" id="IPR014722">
    <property type="entry name" value="Rib_uL2_dom2"/>
</dbReference>
<dbReference type="InterPro" id="IPR002171">
    <property type="entry name" value="Ribosomal_uL2"/>
</dbReference>
<dbReference type="InterPro" id="IPR005880">
    <property type="entry name" value="Ribosomal_uL2_bac/org-type"/>
</dbReference>
<dbReference type="InterPro" id="IPR022669">
    <property type="entry name" value="Ribosomal_uL2_C"/>
</dbReference>
<dbReference type="InterPro" id="IPR022671">
    <property type="entry name" value="Ribosomal_uL2_CS"/>
</dbReference>
<dbReference type="InterPro" id="IPR014726">
    <property type="entry name" value="Ribosomal_uL2_dom3"/>
</dbReference>
<dbReference type="InterPro" id="IPR022666">
    <property type="entry name" value="Ribosomal_uL2_RNA-bd_dom"/>
</dbReference>
<dbReference type="InterPro" id="IPR008991">
    <property type="entry name" value="Translation_prot_SH3-like_sf"/>
</dbReference>
<dbReference type="NCBIfam" id="TIGR01171">
    <property type="entry name" value="rplB_bact"/>
    <property type="match status" value="1"/>
</dbReference>
<dbReference type="PANTHER" id="PTHR13691:SF5">
    <property type="entry name" value="LARGE RIBOSOMAL SUBUNIT PROTEIN UL2M"/>
    <property type="match status" value="1"/>
</dbReference>
<dbReference type="PANTHER" id="PTHR13691">
    <property type="entry name" value="RIBOSOMAL PROTEIN L2"/>
    <property type="match status" value="1"/>
</dbReference>
<dbReference type="Pfam" id="PF00181">
    <property type="entry name" value="Ribosomal_L2"/>
    <property type="match status" value="1"/>
</dbReference>
<dbReference type="Pfam" id="PF03947">
    <property type="entry name" value="Ribosomal_L2_C"/>
    <property type="match status" value="1"/>
</dbReference>
<dbReference type="PIRSF" id="PIRSF002158">
    <property type="entry name" value="Ribosomal_L2"/>
    <property type="match status" value="1"/>
</dbReference>
<dbReference type="SMART" id="SM01383">
    <property type="entry name" value="Ribosomal_L2"/>
    <property type="match status" value="1"/>
</dbReference>
<dbReference type="SMART" id="SM01382">
    <property type="entry name" value="Ribosomal_L2_C"/>
    <property type="match status" value="1"/>
</dbReference>
<dbReference type="SUPFAM" id="SSF50249">
    <property type="entry name" value="Nucleic acid-binding proteins"/>
    <property type="match status" value="1"/>
</dbReference>
<dbReference type="SUPFAM" id="SSF50104">
    <property type="entry name" value="Translation proteins SH3-like domain"/>
    <property type="match status" value="1"/>
</dbReference>
<dbReference type="PROSITE" id="PS00467">
    <property type="entry name" value="RIBOSOMAL_L2"/>
    <property type="match status" value="1"/>
</dbReference>
<name>RL2_RHIEC</name>
<keyword id="KW-1185">Reference proteome</keyword>
<keyword id="KW-0687">Ribonucleoprotein</keyword>
<keyword id="KW-0689">Ribosomal protein</keyword>
<keyword id="KW-0694">RNA-binding</keyword>
<keyword id="KW-0699">rRNA-binding</keyword>
<protein>
    <recommendedName>
        <fullName evidence="1">Large ribosomal subunit protein uL2</fullName>
    </recommendedName>
    <alternativeName>
        <fullName evidence="3">50S ribosomal protein L2</fullName>
    </alternativeName>
</protein>
<organism>
    <name type="scientific">Rhizobium etli (strain ATCC 51251 / DSM 11541 / JCM 21823 / NBRC 15573 / CFN 42)</name>
    <dbReference type="NCBI Taxonomy" id="347834"/>
    <lineage>
        <taxon>Bacteria</taxon>
        <taxon>Pseudomonadati</taxon>
        <taxon>Pseudomonadota</taxon>
        <taxon>Alphaproteobacteria</taxon>
        <taxon>Hyphomicrobiales</taxon>
        <taxon>Rhizobiaceae</taxon>
        <taxon>Rhizobium/Agrobacterium group</taxon>
        <taxon>Rhizobium</taxon>
    </lineage>
</organism>
<sequence length="278" mass="30365">MALKTFNPTTPSQRQLVIVDRSSLYKGKPVKALTEGLTKSGGRNNLGRITARFIGGGHKRSYRLVDFKRRKFDIEGTVERIEYDPNRTAFIALVTYSDGEQAYIIAPQRLAAGDKVIASEKAVDVKPGNTMPLQYIPVGSIIHNVEMKPGKGGQIARSAGSYAQLVGRDQGMAILRLNSGEQRLVSGVCLASIGAVSNPDHANINDGKAGRTVWRGKRPHNRGVVMNPVDHPHGGGEGRTSGGRHPVTPWGKPTKGKRTRSNKSTDKMIMRSRHQRKK</sequence>
<feature type="chain" id="PRO_0000309994" description="Large ribosomal subunit protein uL2">
    <location>
        <begin position="1"/>
        <end position="278"/>
    </location>
</feature>
<feature type="region of interest" description="Disordered" evidence="2">
    <location>
        <begin position="218"/>
        <end position="278"/>
    </location>
</feature>
<proteinExistence type="inferred from homology"/>
<reference key="1">
    <citation type="journal article" date="2006" name="Proc. Natl. Acad. Sci. U.S.A.">
        <title>The partitioned Rhizobium etli genome: genetic and metabolic redundancy in seven interacting replicons.</title>
        <authorList>
            <person name="Gonzalez V."/>
            <person name="Santamaria R.I."/>
            <person name="Bustos P."/>
            <person name="Hernandez-Gonzalez I."/>
            <person name="Medrano-Soto A."/>
            <person name="Moreno-Hagelsieb G."/>
            <person name="Janga S.C."/>
            <person name="Ramirez M.A."/>
            <person name="Jimenez-Jacinto V."/>
            <person name="Collado-Vides J."/>
            <person name="Davila G."/>
        </authorList>
    </citation>
    <scope>NUCLEOTIDE SEQUENCE [LARGE SCALE GENOMIC DNA]</scope>
    <source>
        <strain>ATCC 51251 / DSM 11541 / JCM 21823 / NBRC 15573 / CFN 42</strain>
    </source>
</reference>
<comment type="function">
    <text evidence="1">One of the primary rRNA binding proteins. Required for association of the 30S and 50S subunits to form the 70S ribosome, for tRNA binding and peptide bond formation. It has been suggested to have peptidyltransferase activity; this is somewhat controversial. Makes several contacts with the 16S rRNA in the 70S ribosome.</text>
</comment>
<comment type="subunit">
    <text evidence="1">Part of the 50S ribosomal subunit. Forms a bridge to the 30S subunit in the 70S ribosome.</text>
</comment>
<comment type="similarity">
    <text evidence="1">Belongs to the universal ribosomal protein uL2 family.</text>
</comment>